<reference key="1">
    <citation type="journal article" date="1993" name="Mol. Cell. Biol.">
        <title>Differential regulation of two distinct families of glucose transporter genes in Trypanosoma brucei.</title>
        <authorList>
            <person name="Bringaud F."/>
            <person name="Baltz T."/>
        </authorList>
    </citation>
    <scope>NUCLEOTIDE SEQUENCE [GENOMIC DNA]</scope>
    <source>
        <strain>EATRO 164</strain>
    </source>
</reference>
<accession>Q09039</accession>
<protein>
    <recommendedName>
        <fullName>Glucose transporter 2C</fullName>
    </recommendedName>
</protein>
<proteinExistence type="evidence at transcript level"/>
<keyword id="KW-0325">Glycoprotein</keyword>
<keyword id="KW-0472">Membrane</keyword>
<keyword id="KW-0762">Sugar transport</keyword>
<keyword id="KW-0812">Transmembrane</keyword>
<keyword id="KW-1133">Transmembrane helix</keyword>
<keyword id="KW-0813">Transport</keyword>
<comment type="function">
    <text>Facilitative glucose transporter.</text>
</comment>
<comment type="subcellular location">
    <subcellularLocation>
        <location>Membrane</location>
        <topology>Multi-pass membrane protein</topology>
    </subcellularLocation>
</comment>
<comment type="developmental stage">
    <text>Expressed in both bloodstream and procyclic forms.</text>
</comment>
<comment type="similarity">
    <text evidence="3">Belongs to the major facilitator superfamily. Sugar transporter (TC 2.A.1.1) family.</text>
</comment>
<gene>
    <name type="primary">THT2C</name>
</gene>
<evidence type="ECO:0000255" key="1"/>
<evidence type="ECO:0000256" key="2">
    <source>
        <dbReference type="SAM" id="MobiDB-lite"/>
    </source>
</evidence>
<evidence type="ECO:0000305" key="3"/>
<dbReference type="EMBL" id="X69091">
    <property type="protein sequence ID" value="CAA48841.1"/>
    <property type="molecule type" value="Genomic_DNA"/>
</dbReference>
<dbReference type="SMR" id="Q09039"/>
<dbReference type="GlyCosmos" id="Q09039">
    <property type="glycosylation" value="1 site, No reported glycans"/>
</dbReference>
<dbReference type="GO" id="GO:0016020">
    <property type="term" value="C:membrane"/>
    <property type="evidence" value="ECO:0007669"/>
    <property type="project" value="UniProtKB-SubCell"/>
</dbReference>
<dbReference type="GO" id="GO:0015149">
    <property type="term" value="F:hexose transmembrane transporter activity"/>
    <property type="evidence" value="ECO:0007669"/>
    <property type="project" value="TreeGrafter"/>
</dbReference>
<dbReference type="FunFam" id="1.20.1250.20:FF:000857">
    <property type="entry name" value="Glucose transporter 1B/1C/1D/1F/2B"/>
    <property type="match status" value="1"/>
</dbReference>
<dbReference type="Gene3D" id="1.20.1250.20">
    <property type="entry name" value="MFS general substrate transporter like domains"/>
    <property type="match status" value="1"/>
</dbReference>
<dbReference type="InterPro" id="IPR045263">
    <property type="entry name" value="GLUT"/>
</dbReference>
<dbReference type="InterPro" id="IPR020846">
    <property type="entry name" value="MFS_dom"/>
</dbReference>
<dbReference type="InterPro" id="IPR005828">
    <property type="entry name" value="MFS_sugar_transport-like"/>
</dbReference>
<dbReference type="InterPro" id="IPR036259">
    <property type="entry name" value="MFS_trans_sf"/>
</dbReference>
<dbReference type="InterPro" id="IPR003663">
    <property type="entry name" value="Sugar/inositol_transpt"/>
</dbReference>
<dbReference type="NCBIfam" id="TIGR00879">
    <property type="entry name" value="SP"/>
    <property type="match status" value="1"/>
</dbReference>
<dbReference type="PANTHER" id="PTHR23503:SF8">
    <property type="entry name" value="FACILITATED GLUCOSE TRANSPORTER PROTEIN 1"/>
    <property type="match status" value="1"/>
</dbReference>
<dbReference type="PANTHER" id="PTHR23503">
    <property type="entry name" value="SOLUTE CARRIER FAMILY 2"/>
    <property type="match status" value="1"/>
</dbReference>
<dbReference type="Pfam" id="PF00083">
    <property type="entry name" value="Sugar_tr"/>
    <property type="match status" value="1"/>
</dbReference>
<dbReference type="PRINTS" id="PR00171">
    <property type="entry name" value="SUGRTRNSPORT"/>
</dbReference>
<dbReference type="SUPFAM" id="SSF103473">
    <property type="entry name" value="MFS general substrate transporter"/>
    <property type="match status" value="1"/>
</dbReference>
<dbReference type="PROSITE" id="PS50850">
    <property type="entry name" value="MFS"/>
    <property type="match status" value="1"/>
</dbReference>
<name>TH23_TRYBB</name>
<organism>
    <name type="scientific">Trypanosoma brucei brucei</name>
    <dbReference type="NCBI Taxonomy" id="5702"/>
    <lineage>
        <taxon>Eukaryota</taxon>
        <taxon>Discoba</taxon>
        <taxon>Euglenozoa</taxon>
        <taxon>Kinetoplastea</taxon>
        <taxon>Metakinetoplastina</taxon>
        <taxon>Trypanosomatida</taxon>
        <taxon>Trypanosomatidae</taxon>
        <taxon>Trypanosoma</taxon>
    </lineage>
</organism>
<sequence length="337" mass="35913">MTERRDNVSHAPDAIEGPNDGAHAEDTSPGFFSLENLGVAQVQVVGGTLNGFSIGFVAVYILLYEVATNCSLFKTTEACKAVGSYGCEWKDTEVCSWKKECDSDSDGVNPCESLIGYSSLYSGIFASAMIVGSMVGSIIAGKCITMFGLKKSFIIVGVMSVVASALNHISVATNEFWVLCAGRVLMGIGLGVVCVICPMYVNENAHPKLSKVDGVLFQVFITFGIMLAAMLGLILDKTVNYDNDPDMAGRFHGFCAVSSVLSVAMFLVGMFLRESTATFSQDDDGKADGGMDPNEYGWGQMLWPLFMGAVTAGTLQLTGINAVMNYAPKITENLGMD</sequence>
<feature type="chain" id="PRO_0000050388" description="Glucose transporter 2C">
    <location>
        <begin position="1"/>
        <end position="337" status="greater than"/>
    </location>
</feature>
<feature type="topological domain" description="Cytoplasmic" evidence="1">
    <location>
        <begin position="1"/>
        <end position="43"/>
    </location>
</feature>
<feature type="transmembrane region" description="Helical; Name=1" evidence="1">
    <location>
        <begin position="44"/>
        <end position="64"/>
    </location>
</feature>
<feature type="topological domain" description="Extracellular" evidence="1">
    <location>
        <begin position="65"/>
        <end position="119"/>
    </location>
</feature>
<feature type="transmembrane region" description="Helical; Name=2" evidence="1">
    <location>
        <begin position="120"/>
        <end position="140"/>
    </location>
</feature>
<feature type="topological domain" description="Cytoplasmic" evidence="1">
    <location>
        <begin position="141"/>
        <end position="152"/>
    </location>
</feature>
<feature type="transmembrane region" description="Helical; Name=3" evidence="1">
    <location>
        <begin position="153"/>
        <end position="173"/>
    </location>
</feature>
<feature type="topological domain" description="Extracellular" evidence="1">
    <location>
        <begin position="174"/>
        <end position="175"/>
    </location>
</feature>
<feature type="transmembrane region" description="Helical; Name=4" evidence="1">
    <location>
        <begin position="176"/>
        <end position="196"/>
    </location>
</feature>
<feature type="topological domain" description="Cytoplasmic" evidence="1">
    <location>
        <begin position="197"/>
        <end position="214"/>
    </location>
</feature>
<feature type="transmembrane region" description="Helical; Name=5" evidence="1">
    <location>
        <begin position="215"/>
        <end position="235"/>
    </location>
</feature>
<feature type="topological domain" description="Extracellular" evidence="1">
    <location>
        <begin position="236"/>
        <end position="250"/>
    </location>
</feature>
<feature type="transmembrane region" description="Helical; Name=6" evidence="1">
    <location>
        <begin position="251"/>
        <end position="271"/>
    </location>
</feature>
<feature type="topological domain" description="Cytoplasmic" evidence="1">
    <location>
        <begin position="272"/>
        <end position="300"/>
    </location>
</feature>
<feature type="transmembrane region" description="Helical; Name=7" evidence="1">
    <location>
        <begin position="301"/>
        <end position="321"/>
    </location>
</feature>
<feature type="topological domain" description="Extracellular" evidence="1">
    <location>
        <begin position="322"/>
        <end position="337"/>
    </location>
</feature>
<feature type="region of interest" description="Disordered" evidence="2">
    <location>
        <begin position="1"/>
        <end position="22"/>
    </location>
</feature>
<feature type="glycosylation site" description="N-linked (GlcNAc...) asparagine" evidence="1">
    <location>
        <position position="69"/>
    </location>
</feature>
<feature type="non-terminal residue">
    <location>
        <position position="337"/>
    </location>
</feature>